<gene>
    <name type="primary">glnP</name>
    <name type="ordered locus">RBE_1163</name>
</gene>
<name>GLNP_RICBR</name>
<reference key="1">
    <citation type="journal article" date="2006" name="PLoS Genet.">
        <title>Genome sequence of Rickettsia bellii illuminates the role of amoebae in gene exchanges between intracellular pathogens.</title>
        <authorList>
            <person name="Ogata H."/>
            <person name="La Scola B."/>
            <person name="Audic S."/>
            <person name="Renesto P."/>
            <person name="Blanc G."/>
            <person name="Robert C."/>
            <person name="Fournier P.-E."/>
            <person name="Claverie J.-M."/>
            <person name="Raoult D."/>
        </authorList>
    </citation>
    <scope>NUCLEOTIDE SEQUENCE [LARGE SCALE GENOMIC DNA]</scope>
    <source>
        <strain>RML369-C</strain>
    </source>
</reference>
<comment type="function">
    <text evidence="1">Part of the binding-protein-dependent transport system for glutamine; probably responsible for the translocation of the substrate across the membrane.</text>
</comment>
<comment type="subcellular location">
    <subcellularLocation>
        <location>Cell inner membrane</location>
        <topology>Multi-pass membrane protein</topology>
    </subcellularLocation>
</comment>
<comment type="similarity">
    <text evidence="3">Belongs to the binding-protein-dependent transport system permease family. HisMQ subfamily.</text>
</comment>
<keyword id="KW-0029">Amino-acid transport</keyword>
<keyword id="KW-0997">Cell inner membrane</keyword>
<keyword id="KW-1003">Cell membrane</keyword>
<keyword id="KW-0472">Membrane</keyword>
<keyword id="KW-0812">Transmembrane</keyword>
<keyword id="KW-1133">Transmembrane helix</keyword>
<keyword id="KW-0813">Transport</keyword>
<protein>
    <recommendedName>
        <fullName>Putative glutamine transport system permease protein GlnP</fullName>
    </recommendedName>
</protein>
<feature type="chain" id="PRO_0000286462" description="Putative glutamine transport system permease protein GlnP">
    <location>
        <begin position="1"/>
        <end position="218"/>
    </location>
</feature>
<feature type="transmembrane region" description="Helical" evidence="2">
    <location>
        <begin position="25"/>
        <end position="45"/>
    </location>
</feature>
<feature type="transmembrane region" description="Helical" evidence="2">
    <location>
        <begin position="57"/>
        <end position="79"/>
    </location>
</feature>
<feature type="transmembrane region" description="Helical" evidence="2">
    <location>
        <begin position="86"/>
        <end position="108"/>
    </location>
</feature>
<feature type="transmembrane region" description="Helical" evidence="2">
    <location>
        <begin position="187"/>
        <end position="207"/>
    </location>
</feature>
<feature type="domain" description="ABC transmembrane type-1" evidence="2">
    <location>
        <begin position="19"/>
        <end position="208"/>
    </location>
</feature>
<accession>Q1RHC0</accession>
<organism>
    <name type="scientific">Rickettsia bellii (strain RML369-C)</name>
    <dbReference type="NCBI Taxonomy" id="336407"/>
    <lineage>
        <taxon>Bacteria</taxon>
        <taxon>Pseudomonadati</taxon>
        <taxon>Pseudomonadota</taxon>
        <taxon>Alphaproteobacteria</taxon>
        <taxon>Rickettsiales</taxon>
        <taxon>Rickettsiaceae</taxon>
        <taxon>Rickettsieae</taxon>
        <taxon>Rickettsia</taxon>
        <taxon>belli group</taxon>
    </lineage>
</organism>
<evidence type="ECO:0000250" key="1"/>
<evidence type="ECO:0000255" key="2">
    <source>
        <dbReference type="PROSITE-ProRule" id="PRU00441"/>
    </source>
</evidence>
<evidence type="ECO:0000305" key="3"/>
<dbReference type="EMBL" id="CP000087">
    <property type="protein sequence ID" value="ABE05244.1"/>
    <property type="molecule type" value="Genomic_DNA"/>
</dbReference>
<dbReference type="RefSeq" id="WP_011477822.1">
    <property type="nucleotide sequence ID" value="NC_007940.1"/>
</dbReference>
<dbReference type="SMR" id="Q1RHC0"/>
<dbReference type="KEGG" id="rbe:RBE_1163"/>
<dbReference type="eggNOG" id="COG0765">
    <property type="taxonomic scope" value="Bacteria"/>
</dbReference>
<dbReference type="HOGENOM" id="CLU_019602_1_1_5"/>
<dbReference type="OrthoDB" id="7190458at2"/>
<dbReference type="Proteomes" id="UP000001951">
    <property type="component" value="Chromosome"/>
</dbReference>
<dbReference type="GO" id="GO:0043190">
    <property type="term" value="C:ATP-binding cassette (ABC) transporter complex"/>
    <property type="evidence" value="ECO:0007669"/>
    <property type="project" value="InterPro"/>
</dbReference>
<dbReference type="GO" id="GO:0022857">
    <property type="term" value="F:transmembrane transporter activity"/>
    <property type="evidence" value="ECO:0007669"/>
    <property type="project" value="InterPro"/>
</dbReference>
<dbReference type="GO" id="GO:0006865">
    <property type="term" value="P:amino acid transport"/>
    <property type="evidence" value="ECO:0007669"/>
    <property type="project" value="UniProtKB-KW"/>
</dbReference>
<dbReference type="CDD" id="cd06261">
    <property type="entry name" value="TM_PBP2"/>
    <property type="match status" value="1"/>
</dbReference>
<dbReference type="FunFam" id="1.10.3720.10:FF:000033">
    <property type="entry name" value="Polar amino acid ABC transporter permease"/>
    <property type="match status" value="1"/>
</dbReference>
<dbReference type="Gene3D" id="1.10.3720.10">
    <property type="entry name" value="MetI-like"/>
    <property type="match status" value="1"/>
</dbReference>
<dbReference type="InterPro" id="IPR010065">
    <property type="entry name" value="AA_ABC_transptr_permease_3TM"/>
</dbReference>
<dbReference type="InterPro" id="IPR043429">
    <property type="entry name" value="ArtM/GltK/GlnP/TcyL/YhdX-like"/>
</dbReference>
<dbReference type="InterPro" id="IPR000515">
    <property type="entry name" value="MetI-like"/>
</dbReference>
<dbReference type="InterPro" id="IPR035906">
    <property type="entry name" value="MetI-like_sf"/>
</dbReference>
<dbReference type="NCBIfam" id="TIGR01726">
    <property type="entry name" value="HEQRo_perm_3TM"/>
    <property type="match status" value="1"/>
</dbReference>
<dbReference type="PANTHER" id="PTHR30614:SF20">
    <property type="entry name" value="GLUTAMINE TRANSPORT SYSTEM PERMEASE PROTEIN GLNP"/>
    <property type="match status" value="1"/>
</dbReference>
<dbReference type="PANTHER" id="PTHR30614">
    <property type="entry name" value="MEMBRANE COMPONENT OF AMINO ACID ABC TRANSPORTER"/>
    <property type="match status" value="1"/>
</dbReference>
<dbReference type="Pfam" id="PF00528">
    <property type="entry name" value="BPD_transp_1"/>
    <property type="match status" value="1"/>
</dbReference>
<dbReference type="SUPFAM" id="SSF161098">
    <property type="entry name" value="MetI-like"/>
    <property type="match status" value="1"/>
</dbReference>
<dbReference type="PROSITE" id="PS50928">
    <property type="entry name" value="ABC_TM1"/>
    <property type="match status" value="1"/>
</dbReference>
<sequence length="218" mass="24430">MFEYLIKFSPKILFIVEGTLITLKYSVIAVIFGLVIGVLLALCKVNKNRALRLFADFYTSIFRGTPLLIQLSIIYFASPYLIGIKFTVFMAGAISFSLNSGAYVSEVIRAGINAVDKGQFEAAEALAIPKFLIMKDIILPQAIKNIFPSLTNELINLIKESAIISMFGEMDLMKRAQIVSLETYNYFFPMIVAACCYYILVMLISFIARIIEKKLIVS</sequence>
<proteinExistence type="inferred from homology"/>